<accession>P54286</accession>
<feature type="chain" id="PRO_0000144058" description="Voltage-dependent L-type calcium channel subunit beta-3">
    <location>
        <begin position="1"/>
        <end position="477"/>
    </location>
</feature>
<feature type="domain" description="SH3" evidence="5">
    <location>
        <begin position="59"/>
        <end position="128"/>
    </location>
</feature>
<feature type="region of interest" description="Disordered" evidence="6">
    <location>
        <begin position="1"/>
        <end position="52"/>
    </location>
</feature>
<feature type="region of interest" description="Disordered" evidence="6">
    <location>
        <begin position="129"/>
        <end position="170"/>
    </location>
</feature>
<feature type="region of interest" description="Mediates interaction with the alpha subunit" evidence="3">
    <location>
        <begin position="195"/>
        <end position="345"/>
    </location>
</feature>
<feature type="region of interest" description="Disordered" evidence="6">
    <location>
        <begin position="385"/>
        <end position="477"/>
    </location>
</feature>
<feature type="compositionally biased region" description="Basic and acidic residues" evidence="6">
    <location>
        <begin position="387"/>
        <end position="399"/>
    </location>
</feature>
<feature type="compositionally biased region" description="Basic and acidic residues" evidence="6">
    <location>
        <begin position="456"/>
        <end position="477"/>
    </location>
</feature>
<feature type="modified residue" description="Phosphoserine" evidence="3">
    <location>
        <position position="152"/>
    </location>
</feature>
<feature type="modified residue" description="Phosphoserine" evidence="3">
    <location>
        <position position="393"/>
    </location>
</feature>
<feature type="helix" evidence="11">
    <location>
        <begin position="39"/>
        <end position="54"/>
    </location>
</feature>
<feature type="strand" evidence="11">
    <location>
        <begin position="55"/>
        <end position="57"/>
    </location>
</feature>
<feature type="strand" evidence="11">
    <location>
        <begin position="62"/>
        <end position="70"/>
    </location>
</feature>
<feature type="strand" evidence="11">
    <location>
        <begin position="78"/>
        <end position="80"/>
    </location>
</feature>
<feature type="strand" evidence="11">
    <location>
        <begin position="87"/>
        <end position="100"/>
    </location>
</feature>
<feature type="strand" evidence="11">
    <location>
        <begin position="103"/>
        <end position="108"/>
    </location>
</feature>
<feature type="strand" evidence="11">
    <location>
        <begin position="115"/>
        <end position="118"/>
    </location>
</feature>
<feature type="helix" evidence="11">
    <location>
        <begin position="121"/>
        <end position="134"/>
    </location>
</feature>
<feature type="strand" evidence="11">
    <location>
        <begin position="170"/>
        <end position="173"/>
    </location>
</feature>
<feature type="strand" evidence="12">
    <location>
        <begin position="180"/>
        <end position="183"/>
    </location>
</feature>
<feature type="helix" evidence="12">
    <location>
        <begin position="191"/>
        <end position="207"/>
    </location>
</feature>
<feature type="turn" evidence="11">
    <location>
        <begin position="208"/>
        <end position="210"/>
    </location>
</feature>
<feature type="strand" evidence="12">
    <location>
        <begin position="212"/>
        <end position="216"/>
    </location>
</feature>
<feature type="strand" evidence="10">
    <location>
        <begin position="227"/>
        <end position="231"/>
    </location>
</feature>
<feature type="turn" evidence="11">
    <location>
        <begin position="232"/>
        <end position="234"/>
    </location>
</feature>
<feature type="strand" evidence="12">
    <location>
        <begin position="236"/>
        <end position="238"/>
    </location>
</feature>
<feature type="helix" evidence="12">
    <location>
        <begin position="241"/>
        <end position="244"/>
    </location>
</feature>
<feature type="helix" evidence="12">
    <location>
        <begin position="247"/>
        <end position="262"/>
    </location>
</feature>
<feature type="strand" evidence="12">
    <location>
        <begin position="267"/>
        <end position="270"/>
    </location>
</feature>
<feature type="helix" evidence="12">
    <location>
        <begin position="277"/>
        <end position="280"/>
    </location>
</feature>
<feature type="strand" evidence="11">
    <location>
        <begin position="281"/>
        <end position="284"/>
    </location>
</feature>
<feature type="strand" evidence="12">
    <location>
        <begin position="288"/>
        <end position="292"/>
    </location>
</feature>
<feature type="helix" evidence="12">
    <location>
        <begin position="297"/>
        <end position="305"/>
    </location>
</feature>
<feature type="helix" evidence="12">
    <location>
        <begin position="312"/>
        <end position="326"/>
    </location>
</feature>
<feature type="turn" evidence="12">
    <location>
        <begin position="330"/>
        <end position="332"/>
    </location>
</feature>
<feature type="strand" evidence="12">
    <location>
        <begin position="333"/>
        <end position="337"/>
    </location>
</feature>
<feature type="helix" evidence="12">
    <location>
        <begin position="342"/>
        <end position="360"/>
    </location>
</feature>
<proteinExistence type="evidence at protein level"/>
<gene>
    <name type="primary">CACNB3</name>
    <name type="synonym">CACNLB3</name>
</gene>
<keyword id="KW-0002">3D-structure</keyword>
<keyword id="KW-0106">Calcium</keyword>
<keyword id="KW-0107">Calcium channel</keyword>
<keyword id="KW-0109">Calcium transport</keyword>
<keyword id="KW-0963">Cytoplasm</keyword>
<keyword id="KW-0407">Ion channel</keyword>
<keyword id="KW-0406">Ion transport</keyword>
<keyword id="KW-0597">Phosphoprotein</keyword>
<keyword id="KW-1185">Reference proteome</keyword>
<keyword id="KW-0728">SH3 domain</keyword>
<keyword id="KW-0813">Transport</keyword>
<keyword id="KW-0851">Voltage-gated channel</keyword>
<evidence type="ECO:0000250" key="1">
    <source>
        <dbReference type="UniProtKB" id="P54284"/>
    </source>
</evidence>
<evidence type="ECO:0000250" key="2">
    <source>
        <dbReference type="UniProtKB" id="P54285"/>
    </source>
</evidence>
<evidence type="ECO:0000250" key="3">
    <source>
        <dbReference type="UniProtKB" id="P54287"/>
    </source>
</evidence>
<evidence type="ECO:0000250" key="4">
    <source>
        <dbReference type="UniProtKB" id="Q9MZL3"/>
    </source>
</evidence>
<evidence type="ECO:0000255" key="5">
    <source>
        <dbReference type="PROSITE-ProRule" id="PRU00192"/>
    </source>
</evidence>
<evidence type="ECO:0000256" key="6">
    <source>
        <dbReference type="SAM" id="MobiDB-lite"/>
    </source>
</evidence>
<evidence type="ECO:0000269" key="7">
    <source>
    </source>
</evidence>
<evidence type="ECO:0000303" key="8">
    <source>
    </source>
</evidence>
<evidence type="ECO:0000305" key="9"/>
<evidence type="ECO:0007829" key="10">
    <source>
        <dbReference type="PDB" id="8EOG"/>
    </source>
</evidence>
<evidence type="ECO:0007829" key="11">
    <source>
        <dbReference type="PDB" id="8EOI"/>
    </source>
</evidence>
<evidence type="ECO:0007829" key="12">
    <source>
        <dbReference type="PDB" id="8FD7"/>
    </source>
</evidence>
<protein>
    <recommendedName>
        <fullName>Voltage-dependent L-type calcium channel subunit beta-3</fullName>
        <shortName evidence="8">CAB3</shortName>
    </recommendedName>
    <alternativeName>
        <fullName>Calcium channel voltage-dependent subunit beta 3</fullName>
    </alternativeName>
</protein>
<reference key="1">
    <citation type="journal article" date="1992" name="EMBO J.">
        <title>Calcium channel beta subunit heterogeneity: functional expression of cloned cDNA from heart, aorta and brain.</title>
        <authorList>
            <person name="Hullin R."/>
            <person name="Singer-Lahat D."/>
            <person name="Freichel M."/>
            <person name="Biel M."/>
            <person name="Dascal N."/>
            <person name="Hofmann F."/>
            <person name="Flockerzi V."/>
        </authorList>
    </citation>
    <scope>NUCLEOTIDE SEQUENCE [MRNA]</scope>
    <scope>FUNCTION</scope>
    <scope>SUBUNIT</scope>
    <scope>TISSUE SPECIFICITY</scope>
    <source>
        <tissue>Heart</tissue>
    </source>
</reference>
<comment type="function">
    <text evidence="3 4 7">Regulatory subunit of the voltage-gated calcium channel that gives rise to L-type calcium currents (PubMed:1312465). Increases CACNA1B peak calcium current and shifts the voltage dependencies of channel activation and inactivation (By similarity). Increases CACNA1C peak calcium current and shifts the voltage dependencies of channel activation and inactivation (By similarity).</text>
</comment>
<comment type="subunit">
    <text evidence="1 3 7">Component of a calcium channel complex consisting of a pore-forming alpha subunit (CACNA1C) and the ancillary subunits CACNB3 and CACNA2D1 (PubMed:1312465). The channel complex contains alpha, beta, gamma and delta subunits in a 1:1:1:1 ratio. Interacts with CACNA2D4. Interacts with FASLG (By similarity). Interacts with CBARP; prevents the interaction of CACNB3 with the alpha subunit CACNA1C thereby negatively regulating the activity of the corresponding calcium channel (By similarity).</text>
</comment>
<comment type="subcellular location">
    <subcellularLocation>
        <location evidence="2">Cytoplasm</location>
    </subcellularLocation>
</comment>
<comment type="tissue specificity">
    <text evidence="7">Most abundant in brain but also present in aorta, trachea and lung.</text>
</comment>
<comment type="similarity">
    <text evidence="9">Belongs to the calcium channel beta subunit family.</text>
</comment>
<sequence length="477" mass="53814">MYEDSYVPGFEDSEAGSADSYTSRPSLDSDVSLEEDRESARREVESQAQQQLERAKHKPVAFAVRTNVSYCGVLDEECPVQGSGINFEAKDFLHIKEKYSNDWWIGRLVKEGGDIAFIPSPQRLESIRLKQEQKARRSGNPSSLSDIGNRRSPPPSLAKQKQKQAEHVPPYDVVPSMRPVVLVGPSLKGYEVTDMMQKALFDFLKHRFDGRISITRVTADLSLAKRSVLNNPGKRTIIERSSARSSIAEVQSEIERIFELAKSLQLVVLDADTINHPAQLAKTSLAPIIVFVKVSSPKVLQRLIRSRGKSQMKHLTVQMMAYDKLVQCPPESFDVILDENQLEDACEHLAEYLEVYWRATHHPAPGPGLLGPPSAIPGLQSQQLLGERGEEHSPLERDSLMPSDEAWTGSSQRSSRHLEEDYADAYQDLYQPHRQHTSGLPSANGHDPQDRLLAQDSEHNHNDRNWQRNRPWPKDSY</sequence>
<organism>
    <name type="scientific">Oryctolagus cuniculus</name>
    <name type="common">Rabbit</name>
    <dbReference type="NCBI Taxonomy" id="9986"/>
    <lineage>
        <taxon>Eukaryota</taxon>
        <taxon>Metazoa</taxon>
        <taxon>Chordata</taxon>
        <taxon>Craniata</taxon>
        <taxon>Vertebrata</taxon>
        <taxon>Euteleostomi</taxon>
        <taxon>Mammalia</taxon>
        <taxon>Eutheria</taxon>
        <taxon>Euarchontoglires</taxon>
        <taxon>Glires</taxon>
        <taxon>Lagomorpha</taxon>
        <taxon>Leporidae</taxon>
        <taxon>Oryctolagus</taxon>
    </lineage>
</organism>
<name>CACB3_RABIT</name>
<dbReference type="EMBL" id="X64300">
    <property type="protein sequence ID" value="CAA45578.1"/>
    <property type="molecule type" value="mRNA"/>
</dbReference>
<dbReference type="PIR" id="S21049">
    <property type="entry name" value="S21049"/>
</dbReference>
<dbReference type="RefSeq" id="NP_001095185.1">
    <property type="nucleotide sequence ID" value="NM_001101715.2"/>
</dbReference>
<dbReference type="PDB" id="8EOG">
    <property type="method" value="EM"/>
    <property type="resolution" value="3.30 A"/>
    <property type="chains" value="C=171-361"/>
</dbReference>
<dbReference type="PDB" id="8EOI">
    <property type="method" value="EM"/>
    <property type="resolution" value="3.40 A"/>
    <property type="chains" value="J=38-361"/>
</dbReference>
<dbReference type="PDB" id="8FD7">
    <property type="method" value="EM"/>
    <property type="resolution" value="3.10 A"/>
    <property type="chains" value="C=1-477"/>
</dbReference>
<dbReference type="PDBsum" id="8EOG"/>
<dbReference type="PDBsum" id="8EOI"/>
<dbReference type="PDBsum" id="8FD7"/>
<dbReference type="EMDB" id="EMD-28375"/>
<dbReference type="EMDB" id="EMD-28376"/>
<dbReference type="EMDB" id="EMD-29004"/>
<dbReference type="SMR" id="P54286"/>
<dbReference type="BioGRID" id="1172422">
    <property type="interactions" value="2"/>
</dbReference>
<dbReference type="FunCoup" id="P54286">
    <property type="interactions" value="147"/>
</dbReference>
<dbReference type="STRING" id="9986.ENSOCUP00000006399"/>
<dbReference type="PaxDb" id="9986-ENSOCUP00000006399"/>
<dbReference type="GeneID" id="100009402"/>
<dbReference type="KEGG" id="ocu:100009402"/>
<dbReference type="CTD" id="784"/>
<dbReference type="eggNOG" id="KOG3812">
    <property type="taxonomic scope" value="Eukaryota"/>
</dbReference>
<dbReference type="InParanoid" id="P54286"/>
<dbReference type="OrthoDB" id="5962384at2759"/>
<dbReference type="Proteomes" id="UP000001811">
    <property type="component" value="Unplaced"/>
</dbReference>
<dbReference type="GO" id="GO:0005737">
    <property type="term" value="C:cytoplasm"/>
    <property type="evidence" value="ECO:0007669"/>
    <property type="project" value="UniProtKB-SubCell"/>
</dbReference>
<dbReference type="GO" id="GO:1990454">
    <property type="term" value="C:L-type voltage-gated calcium channel complex"/>
    <property type="evidence" value="ECO:0000250"/>
    <property type="project" value="UniProtKB"/>
</dbReference>
<dbReference type="GO" id="GO:0005246">
    <property type="term" value="F:calcium channel regulator activity"/>
    <property type="evidence" value="ECO:0000250"/>
    <property type="project" value="UniProtKB"/>
</dbReference>
<dbReference type="GO" id="GO:0005245">
    <property type="term" value="F:voltage-gated calcium channel activity"/>
    <property type="evidence" value="ECO:0007669"/>
    <property type="project" value="InterPro"/>
</dbReference>
<dbReference type="GO" id="GO:0061577">
    <property type="term" value="P:calcium ion transmembrane transport via high voltage-gated calcium channel"/>
    <property type="evidence" value="ECO:0000250"/>
    <property type="project" value="UniProtKB"/>
</dbReference>
<dbReference type="GO" id="GO:1901843">
    <property type="term" value="P:positive regulation of high voltage-gated calcium channel activity"/>
    <property type="evidence" value="ECO:0000250"/>
    <property type="project" value="UniProtKB"/>
</dbReference>
<dbReference type="CDD" id="cd12042">
    <property type="entry name" value="SH3_CACNB3"/>
    <property type="match status" value="1"/>
</dbReference>
<dbReference type="FunFam" id="3.40.50.300:FF:000023">
    <property type="entry name" value="Voltage-dependent L-type calcium channel subunit beta-2"/>
    <property type="match status" value="1"/>
</dbReference>
<dbReference type="FunFam" id="2.30.30.40:FF:000049">
    <property type="entry name" value="Voltage-dependent L-type calcium channel subunit beta-3"/>
    <property type="match status" value="1"/>
</dbReference>
<dbReference type="Gene3D" id="3.40.50.300">
    <property type="entry name" value="P-loop containing nucleotide triphosphate hydrolases"/>
    <property type="match status" value="1"/>
</dbReference>
<dbReference type="Gene3D" id="2.30.30.40">
    <property type="entry name" value="SH3 Domains"/>
    <property type="match status" value="1"/>
</dbReference>
<dbReference type="InterPro" id="IPR046937">
    <property type="entry name" value="CAB1-4_N_A-dom"/>
</dbReference>
<dbReference type="InterPro" id="IPR035760">
    <property type="entry name" value="CACNB3_SH3"/>
</dbReference>
<dbReference type="InterPro" id="IPR008145">
    <property type="entry name" value="GK/Ca_channel_bsu"/>
</dbReference>
<dbReference type="InterPro" id="IPR027417">
    <property type="entry name" value="P-loop_NTPase"/>
</dbReference>
<dbReference type="InterPro" id="IPR036028">
    <property type="entry name" value="SH3-like_dom_sf"/>
</dbReference>
<dbReference type="InterPro" id="IPR001452">
    <property type="entry name" value="SH3_domain"/>
</dbReference>
<dbReference type="InterPro" id="IPR008079">
    <property type="entry name" value="VDCC_L_b3su"/>
</dbReference>
<dbReference type="InterPro" id="IPR000584">
    <property type="entry name" value="VDCC_L_bsu"/>
</dbReference>
<dbReference type="PANTHER" id="PTHR11824">
    <property type="entry name" value="VOLTAGE-DEPENDENT CALCIUM CHANNEL BETA SUBUNIT"/>
    <property type="match status" value="1"/>
</dbReference>
<dbReference type="Pfam" id="PF00625">
    <property type="entry name" value="Guanylate_kin"/>
    <property type="match status" value="1"/>
</dbReference>
<dbReference type="Pfam" id="PF12052">
    <property type="entry name" value="VGCC_beta4Aa_N"/>
    <property type="match status" value="1"/>
</dbReference>
<dbReference type="PRINTS" id="PR01626">
    <property type="entry name" value="LCACHANNELB"/>
</dbReference>
<dbReference type="PRINTS" id="PR01696">
    <property type="entry name" value="LCACHANNELB3"/>
</dbReference>
<dbReference type="SMART" id="SM00072">
    <property type="entry name" value="GuKc"/>
    <property type="match status" value="1"/>
</dbReference>
<dbReference type="SUPFAM" id="SSF52540">
    <property type="entry name" value="P-loop containing nucleoside triphosphate hydrolases"/>
    <property type="match status" value="1"/>
</dbReference>
<dbReference type="SUPFAM" id="SSF50044">
    <property type="entry name" value="SH3-domain"/>
    <property type="match status" value="1"/>
</dbReference>
<dbReference type="PROSITE" id="PS50002">
    <property type="entry name" value="SH3"/>
    <property type="match status" value="1"/>
</dbReference>